<evidence type="ECO:0000255" key="1">
    <source>
        <dbReference type="HAMAP-Rule" id="MF_01161"/>
    </source>
</evidence>
<accession>Q8XHL1</accession>
<comment type="function">
    <text evidence="1">Ligates lysine onto the cytidine present at position 34 of the AUA codon-specific tRNA(Ile) that contains the anticodon CAU, in an ATP-dependent manner. Cytidine is converted to lysidine, thus changing the amino acid specificity of the tRNA from methionine to isoleucine.</text>
</comment>
<comment type="catalytic activity">
    <reaction evidence="1">
        <text>cytidine(34) in tRNA(Ile2) + L-lysine + ATP = lysidine(34) in tRNA(Ile2) + AMP + diphosphate + H(+)</text>
        <dbReference type="Rhea" id="RHEA:43744"/>
        <dbReference type="Rhea" id="RHEA-COMP:10625"/>
        <dbReference type="Rhea" id="RHEA-COMP:10670"/>
        <dbReference type="ChEBI" id="CHEBI:15378"/>
        <dbReference type="ChEBI" id="CHEBI:30616"/>
        <dbReference type="ChEBI" id="CHEBI:32551"/>
        <dbReference type="ChEBI" id="CHEBI:33019"/>
        <dbReference type="ChEBI" id="CHEBI:82748"/>
        <dbReference type="ChEBI" id="CHEBI:83665"/>
        <dbReference type="ChEBI" id="CHEBI:456215"/>
        <dbReference type="EC" id="6.3.4.19"/>
    </reaction>
</comment>
<comment type="subcellular location">
    <subcellularLocation>
        <location evidence="1">Cytoplasm</location>
    </subcellularLocation>
</comment>
<comment type="domain">
    <text>The N-terminal region contains the highly conserved SGGXDS motif, predicted to be a P-loop motif involved in ATP binding.</text>
</comment>
<comment type="similarity">
    <text evidence="1">Belongs to the tRNA(Ile)-lysidine synthase family.</text>
</comment>
<keyword id="KW-0067">ATP-binding</keyword>
<keyword id="KW-0963">Cytoplasm</keyword>
<keyword id="KW-0436">Ligase</keyword>
<keyword id="KW-0547">Nucleotide-binding</keyword>
<keyword id="KW-1185">Reference proteome</keyword>
<keyword id="KW-0819">tRNA processing</keyword>
<proteinExistence type="inferred from homology"/>
<organism>
    <name type="scientific">Clostridium perfringens (strain 13 / Type A)</name>
    <dbReference type="NCBI Taxonomy" id="195102"/>
    <lineage>
        <taxon>Bacteria</taxon>
        <taxon>Bacillati</taxon>
        <taxon>Bacillota</taxon>
        <taxon>Clostridia</taxon>
        <taxon>Eubacteriales</taxon>
        <taxon>Clostridiaceae</taxon>
        <taxon>Clostridium</taxon>
    </lineage>
</organism>
<feature type="chain" id="PRO_0000181680" description="tRNA(Ile)-lysidine synthase">
    <location>
        <begin position="1"/>
        <end position="469"/>
    </location>
</feature>
<feature type="binding site" evidence="1">
    <location>
        <begin position="26"/>
        <end position="31"/>
    </location>
    <ligand>
        <name>ATP</name>
        <dbReference type="ChEBI" id="CHEBI:30616"/>
    </ligand>
</feature>
<sequence>MKKKVIDFIKENSMIKSGDKVLVALSGGPDSVCLLHILSELRELLHIEVYAAHVNHCLRGESALKDEAYVEELCKNLNIKCFVKRVDINKISEEQNISTEMAGREERYKFFEELKNEYSLDKIAIAHNANDQAETLIMRALRGTGIEGLVGIKPVRDGIFIRPILILRRKEIEEYCEINNLNPRIDETNLEEIYSRNKIRLKAIPFIEDNFNPDIVATLNRLAYSCSKDVEFIQEEVEKRFPKLCIKENHSILIKEEAFNEKEALLTRIIKKALFEVSSKHNNFELKHIQDIIALKDKGTGKQINITNGVIALNEYGDIRIKLVDSKKAKENKVLNLENIKDELDKNQKVVIEDDILGNYELIVEDLKKGEKFSKDRFIKSFDYDKISNIDIRFRQNGDKIIPLGMKSSKKLKDIFINNKIPKEERDFIPLVLFNNEIAWIVGSNVSETFKVTNKTKKVIKITFKGKEN</sequence>
<protein>
    <recommendedName>
        <fullName evidence="1">tRNA(Ile)-lysidine synthase</fullName>
        <ecNumber evidence="1">6.3.4.19</ecNumber>
    </recommendedName>
    <alternativeName>
        <fullName evidence="1">tRNA(Ile)-2-lysyl-cytidine synthase</fullName>
    </alternativeName>
    <alternativeName>
        <fullName evidence="1">tRNA(Ile)-lysidine synthetase</fullName>
    </alternativeName>
</protein>
<reference key="1">
    <citation type="journal article" date="2002" name="Proc. Natl. Acad. Sci. U.S.A.">
        <title>Complete genome sequence of Clostridium perfringens, an anaerobic flesh-eater.</title>
        <authorList>
            <person name="Shimizu T."/>
            <person name="Ohtani K."/>
            <person name="Hirakawa H."/>
            <person name="Ohshima K."/>
            <person name="Yamashita A."/>
            <person name="Shiba T."/>
            <person name="Ogasawara N."/>
            <person name="Hattori M."/>
            <person name="Kuhara S."/>
            <person name="Hayashi H."/>
        </authorList>
    </citation>
    <scope>NUCLEOTIDE SEQUENCE [LARGE SCALE GENOMIC DNA]</scope>
    <source>
        <strain>13 / Type A</strain>
    </source>
</reference>
<name>TILS_CLOPE</name>
<dbReference type="EC" id="6.3.4.19" evidence="1"/>
<dbReference type="EMBL" id="BA000016">
    <property type="protein sequence ID" value="BAB82178.1"/>
    <property type="molecule type" value="Genomic_DNA"/>
</dbReference>
<dbReference type="RefSeq" id="WP_011010920.1">
    <property type="nucleotide sequence ID" value="NC_003366.1"/>
</dbReference>
<dbReference type="SMR" id="Q8XHL1"/>
<dbReference type="STRING" id="195102.gene:10491799"/>
<dbReference type="KEGG" id="cpe:CPE2472"/>
<dbReference type="HOGENOM" id="CLU_018869_0_1_9"/>
<dbReference type="Proteomes" id="UP000000818">
    <property type="component" value="Chromosome"/>
</dbReference>
<dbReference type="GO" id="GO:0005737">
    <property type="term" value="C:cytoplasm"/>
    <property type="evidence" value="ECO:0007669"/>
    <property type="project" value="UniProtKB-SubCell"/>
</dbReference>
<dbReference type="GO" id="GO:0005524">
    <property type="term" value="F:ATP binding"/>
    <property type="evidence" value="ECO:0007669"/>
    <property type="project" value="UniProtKB-UniRule"/>
</dbReference>
<dbReference type="GO" id="GO:0032267">
    <property type="term" value="F:tRNA(Ile)-lysidine synthase activity"/>
    <property type="evidence" value="ECO:0007669"/>
    <property type="project" value="UniProtKB-EC"/>
</dbReference>
<dbReference type="GO" id="GO:0006400">
    <property type="term" value="P:tRNA modification"/>
    <property type="evidence" value="ECO:0007669"/>
    <property type="project" value="UniProtKB-UniRule"/>
</dbReference>
<dbReference type="CDD" id="cd01992">
    <property type="entry name" value="TilS_N"/>
    <property type="match status" value="1"/>
</dbReference>
<dbReference type="Gene3D" id="1.20.59.20">
    <property type="match status" value="1"/>
</dbReference>
<dbReference type="Gene3D" id="3.40.50.620">
    <property type="entry name" value="HUPs"/>
    <property type="match status" value="1"/>
</dbReference>
<dbReference type="HAMAP" id="MF_01161">
    <property type="entry name" value="tRNA_Ile_lys_synt"/>
    <property type="match status" value="1"/>
</dbReference>
<dbReference type="InterPro" id="IPR012796">
    <property type="entry name" value="Lysidine-tRNA-synth_C"/>
</dbReference>
<dbReference type="InterPro" id="IPR014729">
    <property type="entry name" value="Rossmann-like_a/b/a_fold"/>
</dbReference>
<dbReference type="InterPro" id="IPR011063">
    <property type="entry name" value="TilS/TtcA_N"/>
</dbReference>
<dbReference type="InterPro" id="IPR012094">
    <property type="entry name" value="tRNA_Ile_lys_synt"/>
</dbReference>
<dbReference type="InterPro" id="IPR012795">
    <property type="entry name" value="tRNA_Ile_lys_synt_N"/>
</dbReference>
<dbReference type="NCBIfam" id="TIGR02433">
    <property type="entry name" value="lysidine_TilS_C"/>
    <property type="match status" value="1"/>
</dbReference>
<dbReference type="NCBIfam" id="TIGR02432">
    <property type="entry name" value="lysidine_TilS_N"/>
    <property type="match status" value="1"/>
</dbReference>
<dbReference type="PANTHER" id="PTHR43033">
    <property type="entry name" value="TRNA(ILE)-LYSIDINE SYNTHASE-RELATED"/>
    <property type="match status" value="1"/>
</dbReference>
<dbReference type="PANTHER" id="PTHR43033:SF1">
    <property type="entry name" value="TRNA(ILE)-LYSIDINE SYNTHASE-RELATED"/>
    <property type="match status" value="1"/>
</dbReference>
<dbReference type="Pfam" id="PF01171">
    <property type="entry name" value="ATP_bind_3"/>
    <property type="match status" value="1"/>
</dbReference>
<dbReference type="Pfam" id="PF11734">
    <property type="entry name" value="TilS_C"/>
    <property type="match status" value="1"/>
</dbReference>
<dbReference type="SMART" id="SM00977">
    <property type="entry name" value="TilS_C"/>
    <property type="match status" value="1"/>
</dbReference>
<dbReference type="SUPFAM" id="SSF52402">
    <property type="entry name" value="Adenine nucleotide alpha hydrolases-like"/>
    <property type="match status" value="1"/>
</dbReference>
<dbReference type="SUPFAM" id="SSF82829">
    <property type="entry name" value="MesJ substrate recognition domain-like"/>
    <property type="match status" value="1"/>
</dbReference>
<dbReference type="SUPFAM" id="SSF56037">
    <property type="entry name" value="PheT/TilS domain"/>
    <property type="match status" value="1"/>
</dbReference>
<gene>
    <name evidence="1" type="primary">tilS</name>
    <name type="ordered locus">CPE2472</name>
</gene>